<sequence>MQNIFENCSYHSKYEPYFLNCTNTTNQCVLIQDVGIIQAIDFWANLCIPFTLFVIAFILNGYYLSILIPEFRKMNDTTKKQYIFVVSRGISSLSASSIMMVLRLLKMLSTSFTVYFLFFLIDDLSFYSLLGSYVGSTLLLYLATVRPIFYSIQISVRIVYKFALVNVLLAVVLAVTTAIFQAAEVSDGFFHCDVQHCQPIINIAMFVIIATSFLIPIITLTFVLVTLCFQKSRTQSIGNFTVDNSVYKSARTRLAWTLFTFTLISLTEMIPSSFLVNLRVEDTITICVNFYQADHLFIPAIMNSFQTLAWGIALIVDPLCALLFDPRIRKVWVEHVSRLSIIIGRSFEACCHSNLNKEIQDK</sequence>
<organism>
    <name type="scientific">Caenorhabditis elegans</name>
    <dbReference type="NCBI Taxonomy" id="6239"/>
    <lineage>
        <taxon>Eukaryota</taxon>
        <taxon>Metazoa</taxon>
        <taxon>Ecdysozoa</taxon>
        <taxon>Nematoda</taxon>
        <taxon>Chromadorea</taxon>
        <taxon>Rhabditida</taxon>
        <taxon>Rhabditina</taxon>
        <taxon>Rhabditomorpha</taxon>
        <taxon>Rhabditoidea</taxon>
        <taxon>Rhabditidae</taxon>
        <taxon>Peloderinae</taxon>
        <taxon>Caenorhabditis</taxon>
    </lineage>
</organism>
<proteinExistence type="inferred from homology"/>
<dbReference type="EMBL" id="FO080136">
    <property type="protein sequence ID" value="CCD61506.1"/>
    <property type="molecule type" value="Genomic_DNA"/>
</dbReference>
<dbReference type="PIR" id="F88465">
    <property type="entry name" value="F88465"/>
</dbReference>
<dbReference type="RefSeq" id="NP_498242.3">
    <property type="nucleotide sequence ID" value="NM_065841.6"/>
</dbReference>
<dbReference type="SMR" id="Q10909"/>
<dbReference type="FunCoup" id="Q10909">
    <property type="interactions" value="35"/>
</dbReference>
<dbReference type="PaxDb" id="6239-B0244.5"/>
<dbReference type="EnsemblMetazoa" id="B0244.5.1">
    <property type="protein sequence ID" value="B0244.5.1"/>
    <property type="gene ID" value="WBGene00015080"/>
</dbReference>
<dbReference type="GeneID" id="181876"/>
<dbReference type="KEGG" id="cel:CELE_B0244.5"/>
<dbReference type="UCSC" id="B0244.5">
    <property type="organism name" value="c. elegans"/>
</dbReference>
<dbReference type="AGR" id="WB:WBGene00015080"/>
<dbReference type="CTD" id="181876"/>
<dbReference type="WormBase" id="B0244.5">
    <property type="protein sequence ID" value="CE43682"/>
    <property type="gene ID" value="WBGene00015080"/>
</dbReference>
<dbReference type="eggNOG" id="ENOG502THD0">
    <property type="taxonomic scope" value="Eukaryota"/>
</dbReference>
<dbReference type="GeneTree" id="ENSGT00970000195911"/>
<dbReference type="HOGENOM" id="CLU_047461_1_0_1"/>
<dbReference type="InParanoid" id="Q10909"/>
<dbReference type="OMA" id="PAIMNSF"/>
<dbReference type="OrthoDB" id="5790882at2759"/>
<dbReference type="PhylomeDB" id="Q10909"/>
<dbReference type="PRO" id="PR:Q10909"/>
<dbReference type="Proteomes" id="UP000001940">
    <property type="component" value="Chromosome III"/>
</dbReference>
<dbReference type="Bgee" id="WBGene00015080">
    <property type="expression patterns" value="Expressed in adult organism and 1 other cell type or tissue"/>
</dbReference>
<dbReference type="GO" id="GO:0005886">
    <property type="term" value="C:plasma membrane"/>
    <property type="evidence" value="ECO:0007669"/>
    <property type="project" value="UniProtKB-SubCell"/>
</dbReference>
<dbReference type="GO" id="GO:0004930">
    <property type="term" value="F:G protein-coupled receptor activity"/>
    <property type="evidence" value="ECO:0007669"/>
    <property type="project" value="UniProtKB-KW"/>
</dbReference>
<dbReference type="Gene3D" id="1.20.1070.10">
    <property type="entry name" value="Rhodopsin 7-helix transmembrane proteins"/>
    <property type="match status" value="1"/>
</dbReference>
<dbReference type="InterPro" id="IPR017452">
    <property type="entry name" value="GPCR_Rhodpsn_7TM"/>
</dbReference>
<dbReference type="InterPro" id="IPR040435">
    <property type="entry name" value="Put_GPCR_Chromadorea"/>
</dbReference>
<dbReference type="PANTHER" id="PTHR37441:SF2">
    <property type="entry name" value="G-PROTEIN COUPLED RECEPTOR B0244.10-RELATED"/>
    <property type="match status" value="1"/>
</dbReference>
<dbReference type="PANTHER" id="PTHR37441">
    <property type="entry name" value="PROTEIN CBG16518"/>
    <property type="match status" value="1"/>
</dbReference>
<dbReference type="SUPFAM" id="SSF81321">
    <property type="entry name" value="Family A G protein-coupled receptor-like"/>
    <property type="match status" value="1"/>
</dbReference>
<dbReference type="PROSITE" id="PS50262">
    <property type="entry name" value="G_PROTEIN_RECEP_F1_2"/>
    <property type="match status" value="1"/>
</dbReference>
<name>YS95_CAEEL</name>
<feature type="chain" id="PRO_0000065051" description="Putative G-protein coupled receptor B0244.5">
    <location>
        <begin position="1"/>
        <end position="362"/>
    </location>
</feature>
<feature type="topological domain" description="Extracellular" evidence="1">
    <location>
        <begin position="1"/>
        <end position="47"/>
    </location>
</feature>
<feature type="transmembrane region" description="Helical; Name=1" evidence="1">
    <location>
        <begin position="48"/>
        <end position="68"/>
    </location>
</feature>
<feature type="topological domain" description="Cytoplasmic" evidence="1">
    <location>
        <begin position="69"/>
        <end position="81"/>
    </location>
</feature>
<feature type="transmembrane region" description="Helical; Name=2" evidence="1">
    <location>
        <begin position="82"/>
        <end position="102"/>
    </location>
</feature>
<feature type="topological domain" description="Extracellular" evidence="1">
    <location>
        <begin position="103"/>
        <end position="125"/>
    </location>
</feature>
<feature type="transmembrane region" description="Helical; Name=3" evidence="1">
    <location>
        <begin position="126"/>
        <end position="145"/>
    </location>
</feature>
<feature type="topological domain" description="Cytoplasmic" evidence="1">
    <location>
        <begin position="146"/>
        <end position="161"/>
    </location>
</feature>
<feature type="transmembrane region" description="Helical; Name=4" evidence="1">
    <location>
        <begin position="162"/>
        <end position="182"/>
    </location>
</feature>
<feature type="topological domain" description="Extracellular" evidence="1">
    <location>
        <begin position="183"/>
        <end position="204"/>
    </location>
</feature>
<feature type="transmembrane region" description="Helical; Name=5" evidence="1">
    <location>
        <begin position="205"/>
        <end position="225"/>
    </location>
</feature>
<feature type="topological domain" description="Cytoplasmic" evidence="1">
    <location>
        <begin position="226"/>
        <end position="255"/>
    </location>
</feature>
<feature type="transmembrane region" description="Helical; Name=6" evidence="1">
    <location>
        <begin position="256"/>
        <end position="276"/>
    </location>
</feature>
<feature type="topological domain" description="Extracellular" evidence="1">
    <location>
        <begin position="277"/>
        <end position="295"/>
    </location>
</feature>
<feature type="transmembrane region" description="Helical; Name=7" evidence="1">
    <location>
        <begin position="296"/>
        <end position="316"/>
    </location>
</feature>
<feature type="topological domain" description="Cytoplasmic" evidence="1">
    <location>
        <begin position="317"/>
        <end position="362"/>
    </location>
</feature>
<feature type="glycosylation site" description="N-linked (GlcNAc...) asparagine" evidence="1">
    <location>
        <position position="7"/>
    </location>
</feature>
<feature type="glycosylation site" description="N-linked (GlcNAc...) asparagine" evidence="1">
    <location>
        <position position="20"/>
    </location>
</feature>
<feature type="glycosylation site" description="N-linked (GlcNAc...) asparagine" evidence="1">
    <location>
        <position position="23"/>
    </location>
</feature>
<protein>
    <recommendedName>
        <fullName>Putative G-protein coupled receptor B0244.5</fullName>
    </recommendedName>
</protein>
<gene>
    <name type="ORF">B0244.5</name>
</gene>
<evidence type="ECO:0000255" key="1"/>
<evidence type="ECO:0000255" key="2">
    <source>
        <dbReference type="PROSITE-ProRule" id="PRU00521"/>
    </source>
</evidence>
<evidence type="ECO:0000305" key="3"/>
<comment type="subcellular location">
    <subcellularLocation>
        <location evidence="3">Cell membrane</location>
        <topology evidence="3">Multi-pass membrane protein</topology>
    </subcellularLocation>
</comment>
<comment type="similarity">
    <text evidence="2">Belongs to the G-protein coupled receptor 1 family. B0244 subfamily.</text>
</comment>
<accession>Q10909</accession>
<keyword id="KW-1003">Cell membrane</keyword>
<keyword id="KW-0297">G-protein coupled receptor</keyword>
<keyword id="KW-0325">Glycoprotein</keyword>
<keyword id="KW-0472">Membrane</keyword>
<keyword id="KW-0675">Receptor</keyword>
<keyword id="KW-1185">Reference proteome</keyword>
<keyword id="KW-0807">Transducer</keyword>
<keyword id="KW-0812">Transmembrane</keyword>
<keyword id="KW-1133">Transmembrane helix</keyword>
<reference key="1">
    <citation type="journal article" date="1998" name="Science">
        <title>Genome sequence of the nematode C. elegans: a platform for investigating biology.</title>
        <authorList>
            <consortium name="The C. elegans sequencing consortium"/>
        </authorList>
    </citation>
    <scope>NUCLEOTIDE SEQUENCE [LARGE SCALE GENOMIC DNA]</scope>
    <source>
        <strain>Bristol N2</strain>
    </source>
</reference>